<dbReference type="EC" id="3.6.1.-" evidence="2"/>
<dbReference type="EMBL" id="AE005673">
    <property type="protein sequence ID" value="AAK24598.1"/>
    <property type="molecule type" value="Genomic_DNA"/>
</dbReference>
<dbReference type="EMBL" id="U01165">
    <property type="protein sequence ID" value="AAA18638.1"/>
    <property type="molecule type" value="Genomic_DNA"/>
</dbReference>
<dbReference type="PIR" id="B87575">
    <property type="entry name" value="B87575"/>
</dbReference>
<dbReference type="RefSeq" id="NP_421430.1">
    <property type="nucleotide sequence ID" value="NC_002696.2"/>
</dbReference>
<dbReference type="RefSeq" id="WP_010920483.1">
    <property type="nucleotide sequence ID" value="NC_002696.2"/>
</dbReference>
<dbReference type="SMR" id="Q45978"/>
<dbReference type="STRING" id="190650.CC_2631"/>
<dbReference type="EnsemblBacteria" id="AAK24598">
    <property type="protein sequence ID" value="AAK24598"/>
    <property type="gene ID" value="CC_2631"/>
</dbReference>
<dbReference type="KEGG" id="ccr:CC_2631"/>
<dbReference type="PATRIC" id="fig|190650.5.peg.2643"/>
<dbReference type="eggNOG" id="COG0488">
    <property type="taxonomic scope" value="Bacteria"/>
</dbReference>
<dbReference type="HOGENOM" id="CLU_000604_36_0_5"/>
<dbReference type="BioCyc" id="CAULO:CC2631-MONOMER"/>
<dbReference type="Proteomes" id="UP000001816">
    <property type="component" value="Chromosome"/>
</dbReference>
<dbReference type="GO" id="GO:0005737">
    <property type="term" value="C:cytoplasm"/>
    <property type="evidence" value="ECO:0007669"/>
    <property type="project" value="UniProtKB-SubCell"/>
</dbReference>
<dbReference type="GO" id="GO:0005524">
    <property type="term" value="F:ATP binding"/>
    <property type="evidence" value="ECO:0007669"/>
    <property type="project" value="UniProtKB-UniRule"/>
</dbReference>
<dbReference type="GO" id="GO:0016887">
    <property type="term" value="F:ATP hydrolysis activity"/>
    <property type="evidence" value="ECO:0007669"/>
    <property type="project" value="UniProtKB-UniRule"/>
</dbReference>
<dbReference type="GO" id="GO:0003677">
    <property type="term" value="F:DNA binding"/>
    <property type="evidence" value="ECO:0007669"/>
    <property type="project" value="UniProtKB-UniRule"/>
</dbReference>
<dbReference type="GO" id="GO:0043022">
    <property type="term" value="F:ribosome binding"/>
    <property type="evidence" value="ECO:0007669"/>
    <property type="project" value="UniProtKB-UniRule"/>
</dbReference>
<dbReference type="GO" id="GO:0006281">
    <property type="term" value="P:DNA repair"/>
    <property type="evidence" value="ECO:0007669"/>
    <property type="project" value="UniProtKB-KW"/>
</dbReference>
<dbReference type="CDD" id="cd03221">
    <property type="entry name" value="ABCF_EF-3"/>
    <property type="match status" value="2"/>
</dbReference>
<dbReference type="FunFam" id="3.40.50.300:FF:000309">
    <property type="entry name" value="ABC transporter ATP-binding protein"/>
    <property type="match status" value="1"/>
</dbReference>
<dbReference type="Gene3D" id="3.40.50.300">
    <property type="entry name" value="P-loop containing nucleotide triphosphate hydrolases"/>
    <property type="match status" value="2"/>
</dbReference>
<dbReference type="Gene3D" id="1.10.287.380">
    <property type="entry name" value="Valyl-tRNA synthetase, C-terminal domain"/>
    <property type="match status" value="1"/>
</dbReference>
<dbReference type="HAMAP" id="MF_00848">
    <property type="entry name" value="Uup"/>
    <property type="match status" value="1"/>
</dbReference>
<dbReference type="InterPro" id="IPR003593">
    <property type="entry name" value="AAA+_ATPase"/>
</dbReference>
<dbReference type="InterPro" id="IPR032524">
    <property type="entry name" value="ABC_tran_C"/>
</dbReference>
<dbReference type="InterPro" id="IPR003439">
    <property type="entry name" value="ABC_transporter-like_ATP-bd"/>
</dbReference>
<dbReference type="InterPro" id="IPR017871">
    <property type="entry name" value="ABC_transporter-like_CS"/>
</dbReference>
<dbReference type="InterPro" id="IPR051309">
    <property type="entry name" value="ABCF_ATPase"/>
</dbReference>
<dbReference type="InterPro" id="IPR027417">
    <property type="entry name" value="P-loop_NTPase"/>
</dbReference>
<dbReference type="InterPro" id="IPR043686">
    <property type="entry name" value="Uup"/>
</dbReference>
<dbReference type="InterPro" id="IPR037118">
    <property type="entry name" value="Val-tRNA_synth_C_sf"/>
</dbReference>
<dbReference type="PANTHER" id="PTHR42855">
    <property type="entry name" value="ABC TRANSPORTER ATP-BINDING SUBUNIT"/>
    <property type="match status" value="1"/>
</dbReference>
<dbReference type="PANTHER" id="PTHR42855:SF1">
    <property type="entry name" value="ABC TRANSPORTER DOMAIN-CONTAINING PROTEIN"/>
    <property type="match status" value="1"/>
</dbReference>
<dbReference type="Pfam" id="PF00005">
    <property type="entry name" value="ABC_tran"/>
    <property type="match status" value="2"/>
</dbReference>
<dbReference type="Pfam" id="PF16326">
    <property type="entry name" value="ABC_tran_CTD"/>
    <property type="match status" value="1"/>
</dbReference>
<dbReference type="SMART" id="SM00382">
    <property type="entry name" value="AAA"/>
    <property type="match status" value="2"/>
</dbReference>
<dbReference type="SUPFAM" id="SSF52540">
    <property type="entry name" value="P-loop containing nucleoside triphosphate hydrolases"/>
    <property type="match status" value="2"/>
</dbReference>
<dbReference type="PROSITE" id="PS00211">
    <property type="entry name" value="ABC_TRANSPORTER_1"/>
    <property type="match status" value="1"/>
</dbReference>
<dbReference type="PROSITE" id="PS50893">
    <property type="entry name" value="ABC_TRANSPORTER_2"/>
    <property type="match status" value="2"/>
</dbReference>
<keyword id="KW-0067">ATP-binding</keyword>
<keyword id="KW-0963">Cytoplasm</keyword>
<keyword id="KW-0227">DNA damage</keyword>
<keyword id="KW-0234">DNA repair</keyword>
<keyword id="KW-0238">DNA-binding</keyword>
<keyword id="KW-0378">Hydrolase</keyword>
<keyword id="KW-0547">Nucleotide-binding</keyword>
<keyword id="KW-1185">Reference proteome</keyword>
<keyword id="KW-0677">Repeat</keyword>
<reference key="1">
    <citation type="journal article" date="2001" name="Proc. Natl. Acad. Sci. U.S.A.">
        <title>Complete genome sequence of Caulobacter crescentus.</title>
        <authorList>
            <person name="Nierman W.C."/>
            <person name="Feldblyum T.V."/>
            <person name="Laub M.T."/>
            <person name="Paulsen I.T."/>
            <person name="Nelson K.E."/>
            <person name="Eisen J.A."/>
            <person name="Heidelberg J.F."/>
            <person name="Alley M.R.K."/>
            <person name="Ohta N."/>
            <person name="Maddock J.R."/>
            <person name="Potocka I."/>
            <person name="Nelson W.C."/>
            <person name="Newton A."/>
            <person name="Stephens C."/>
            <person name="Phadke N.D."/>
            <person name="Ely B."/>
            <person name="DeBoy R.T."/>
            <person name="Dodson R.J."/>
            <person name="Durkin A.S."/>
            <person name="Gwinn M.L."/>
            <person name="Haft D.H."/>
            <person name="Kolonay J.F."/>
            <person name="Smit J."/>
            <person name="Craven M.B."/>
            <person name="Khouri H.M."/>
            <person name="Shetty J."/>
            <person name="Berry K.J."/>
            <person name="Utterback T.R."/>
            <person name="Tran K."/>
            <person name="Wolf A.M."/>
            <person name="Vamathevan J.J."/>
            <person name="Ermolaeva M.D."/>
            <person name="White O."/>
            <person name="Salzberg S.L."/>
            <person name="Venter J.C."/>
            <person name="Shapiro L."/>
            <person name="Fraser C.M."/>
        </authorList>
    </citation>
    <scope>NUCLEOTIDE SEQUENCE [LARGE SCALE GENOMIC DNA]</scope>
    <source>
        <strain>ATCC 19089 / CIP 103742 / CB 15</strain>
    </source>
</reference>
<reference key="2">
    <citation type="journal article" date="1994" name="FEMS Microbiol. Lett.">
        <title>The Caulobacter crescentus holdfast: identification of holdfast attachment complex genes.</title>
        <authorList>
            <person name="Kurtz H.D. Jr."/>
            <person name="Smit J."/>
        </authorList>
    </citation>
    <scope>NUCLEOTIDE SEQUENCE [GENOMIC DNA] OF 1-368</scope>
    <scope>POSSIBLE FUNCTION</scope>
    <source>
        <strain>CB2A</strain>
    </source>
</reference>
<reference key="3">
    <citation type="journal article" date="2019" name="J. Mol. Biol.">
        <title>ABCF ATPases involved in protein synthesis, ribosome assembly and antibiotic resistance: structural and functional diversification across the tree of life.</title>
        <authorList>
            <person name="Murina V."/>
            <person name="Kasari M."/>
            <person name="Takada H."/>
            <person name="Hinnu M."/>
            <person name="Saha C.K."/>
            <person name="Grimshaw J.W."/>
            <person name="Seki T."/>
            <person name="Reith M."/>
            <person name="Putrins M."/>
            <person name="Tenson T."/>
            <person name="Strahl H."/>
            <person name="Hauryliuk V."/>
            <person name="Atkinson G.C."/>
        </authorList>
    </citation>
    <scope>DISCUSSION OF SEQUENCE</scope>
    <scope>FAMILY</scope>
</reference>
<accession>Q45978</accession>
<comment type="function">
    <text evidence="2">Probably plays a role in ribosome assembly or function. May be involved in resolution of branched DNA intermediates that result from template switching in postreplication gaps. Binds DNA and has ATPase activity.</text>
</comment>
<comment type="function">
    <text evidence="4">One of a cluster of genes involved in attachment of the holdfast to the cell. The holdfast is a structure that allows the bacteria to firmly adhere to surfaces.</text>
</comment>
<comment type="catalytic activity">
    <reaction evidence="2">
        <text>ATP + H2O = ADP + phosphate + H(+)</text>
        <dbReference type="Rhea" id="RHEA:13065"/>
        <dbReference type="ChEBI" id="CHEBI:15377"/>
        <dbReference type="ChEBI" id="CHEBI:15378"/>
        <dbReference type="ChEBI" id="CHEBI:30616"/>
        <dbReference type="ChEBI" id="CHEBI:43474"/>
        <dbReference type="ChEBI" id="CHEBI:456216"/>
    </reaction>
</comment>
<comment type="subcellular location">
    <subcellularLocation>
        <location evidence="2">Cytoplasm</location>
    </subcellularLocation>
    <text evidence="2">Associates with ribosomes.</text>
</comment>
<comment type="domain">
    <text evidence="1">The C-terminal domain (CTD) helps bind DNA.</text>
</comment>
<comment type="similarity">
    <text evidence="2 3">Belongs to the ABC transporter superfamily. ABCF family. Uup subfamily.</text>
</comment>
<gene>
    <name evidence="2 3" type="primary">uup</name>
    <name evidence="4" type="synonym">hfaC</name>
    <name type="ordered locus">CC_2631</name>
</gene>
<sequence>MASPARAPVLALKDVRLADGAKPLFDGVDLALEPRVRACLVGRNGAGKSTLLKILAGQGVEADSGERAVQPGAKVVYVSQEPEITGETLLDYATAGGAQDYEAQAALADFGLDPDKSAKGLSGGETRRAALARAFAEQPDVLLLDEPTNHLDIFAIQTLEDELAASKCAALIVSHDRAFLNRVTERCFWLEHRKIRRLDKGFSEFEAWAESIMAADAEEARRLDKVLERENAWLARGVQGRRARNEGRRRALLALRAEKKDRQSELRGTMTMAVESAGTSGKRVVEAKGVTKRFGERTIVENFSTRILRGDRVALVGPNGAGKTTLVKLLLGELERDAGTVQLGTNLEVSYIDQARMALSDKITVWDFLTPGGGDSIIVRGHPKHVAGYAKEFLFTDAQLRQPVTSLSGGERNRLLLARALANPTNLMVLDEPTNDLDMDTLDLLEDLLADFDGTLILVSHDRDFIDRLASSTIALDGKGGVVETPGGWTDLMDQNPDFFKASKGGTAFAPVSKAATKPAPAAPAAPKKSAKLSYKDQRRLEECEALIAKSPAIIAKLEEALADPNLYTRDPATFDKTMKALDKARADLEQAEMEWLELEEKKENLAG</sequence>
<organism>
    <name type="scientific">Caulobacter vibrioides (strain ATCC 19089 / CIP 103742 / CB 15)</name>
    <name type="common">Caulobacter crescentus</name>
    <dbReference type="NCBI Taxonomy" id="190650"/>
    <lineage>
        <taxon>Bacteria</taxon>
        <taxon>Pseudomonadati</taxon>
        <taxon>Pseudomonadota</taxon>
        <taxon>Alphaproteobacteria</taxon>
        <taxon>Caulobacterales</taxon>
        <taxon>Caulobacteraceae</taxon>
        <taxon>Caulobacter</taxon>
    </lineage>
</organism>
<evidence type="ECO:0000250" key="1">
    <source>
        <dbReference type="UniProtKB" id="P43672"/>
    </source>
</evidence>
<evidence type="ECO:0000255" key="2">
    <source>
        <dbReference type="HAMAP-Rule" id="MF_00848"/>
    </source>
</evidence>
<evidence type="ECO:0000303" key="3">
    <source>
    </source>
</evidence>
<evidence type="ECO:0000303" key="4">
    <source>
    </source>
</evidence>
<evidence type="ECO:0000305" key="5"/>
<feature type="chain" id="PRO_0000092340" description="ATP-binding protein Uup">
    <location>
        <begin position="1"/>
        <end position="608"/>
    </location>
</feature>
<feature type="domain" description="ABC transporter 1" evidence="2">
    <location>
        <begin position="7"/>
        <end position="217"/>
    </location>
</feature>
<feature type="domain" description="ABC transporter 2" evidence="2">
    <location>
        <begin position="285"/>
        <end position="512"/>
    </location>
</feature>
<feature type="region of interest" description="C-terminal domain (CTD), binds DNA" evidence="1">
    <location>
        <begin position="522"/>
        <end position="608"/>
    </location>
</feature>
<feature type="binding site" evidence="2">
    <location>
        <begin position="42"/>
        <end position="49"/>
    </location>
    <ligand>
        <name>ATP</name>
        <dbReference type="ChEBI" id="CHEBI:30616"/>
        <label>1</label>
    </ligand>
</feature>
<feature type="binding site" evidence="2">
    <location>
        <begin position="317"/>
        <end position="324"/>
    </location>
    <ligand>
        <name>ATP</name>
        <dbReference type="ChEBI" id="CHEBI:30616"/>
        <label>2</label>
    </ligand>
</feature>
<feature type="sequence conflict" description="In Ref. 2; AAA18638." evidence="5" ref="2">
    <original>V</original>
    <variation>E</variation>
    <location>
        <position position="36"/>
    </location>
</feature>
<feature type="sequence conflict" description="In Ref. 2; AAA18638." evidence="5" ref="2">
    <original>E</original>
    <variation>D</variation>
    <location>
        <position position="296"/>
    </location>
</feature>
<feature type="sequence conflict" description="In Ref. 2; AAA18638." evidence="5" ref="2">
    <original>DF</original>
    <variation>TS</variation>
    <location>
        <begin position="367"/>
        <end position="368"/>
    </location>
</feature>
<proteinExistence type="inferred from homology"/>
<name>UUP_CAUVC</name>
<protein>
    <recommendedName>
        <fullName evidence="2 3">ATP-binding protein Uup</fullName>
        <ecNumber evidence="2">3.6.1.-</ecNumber>
    </recommendedName>
    <alternativeName>
        <fullName evidence="4">Holdfast attachment protein C</fullName>
    </alternativeName>
</protein>